<geneLocation type="mitochondrion"/>
<proteinExistence type="inferred from homology"/>
<reference key="1">
    <citation type="journal article" date="1987" name="Curr. Genet.">
        <title>The ATPase subunit 6 gene of tobacco mitochondria contains an unusual sequence.</title>
        <authorList>
            <person name="Bland M.M."/>
            <person name="Levings C.S. III"/>
            <person name="Matzinger D.F."/>
        </authorList>
    </citation>
    <scope>NUCLEOTIDE SEQUENCE [GENOMIC DNA]</scope>
    <source>
        <strain>cv. Hicks</strain>
        <tissue>Leaf</tissue>
    </source>
</reference>
<keyword id="KW-0066">ATP synthesis</keyword>
<keyword id="KW-0138">CF(0)</keyword>
<keyword id="KW-0375">Hydrogen ion transport</keyword>
<keyword id="KW-0406">Ion transport</keyword>
<keyword id="KW-0472">Membrane</keyword>
<keyword id="KW-0496">Mitochondrion</keyword>
<keyword id="KW-0999">Mitochondrion inner membrane</keyword>
<keyword id="KW-1185">Reference proteome</keyword>
<keyword id="KW-0812">Transmembrane</keyword>
<keyword id="KW-1133">Transmembrane helix</keyword>
<keyword id="KW-0813">Transport</keyword>
<sequence length="395" mass="43504">MFRRIFLFDEDSLNSSVTSYTNASQSTTTIMDYSLKSSDTQGSSSGIFTDHPGLNPCSERIVELQYDIRLKLGALMPKESAQKVLEASEALHGESNNIAFLEYLLEDLQQNGVGGEAYKDAVDLSKDLVSSPLEQFEIISLIPMKIGNLYFSFTNPSLFMLLTLSLVLLLVYFVTKKGGGNSVPNAWQSLVELIYDFVLNPVNEQIGGLSGNVKQKFSPRISVTFTFSLFCNPQGMIPYSFTVTSHFLITLGLSFSIFIGITIVGFQKNGLHFLSFLLPAGVPLPLAPFLVLLELIPYCFRALSSGIRLFANMMAGHSSVKILSGFAWTMLCMNDLLYFIGDLGPLFIVLALTGLELGVAISQAHVSTILICIYLNDAINLHQSASFFIIEQKRV</sequence>
<protein>
    <recommendedName>
        <fullName>ATP synthase subunit a</fullName>
    </recommendedName>
    <alternativeName>
        <fullName>F-ATPase protein 6</fullName>
    </alternativeName>
</protein>
<dbReference type="EMBL" id="X06595">
    <property type="protein sequence ID" value="CAA29816.1"/>
    <property type="molecule type" value="Genomic_DNA"/>
</dbReference>
<dbReference type="PIR" id="S00651">
    <property type="entry name" value="PWNT6M"/>
</dbReference>
<dbReference type="RefSeq" id="YP_173362.1">
    <property type="nucleotide sequence ID" value="NC_006581.1"/>
</dbReference>
<dbReference type="SMR" id="P05499"/>
<dbReference type="GeneID" id="3205347"/>
<dbReference type="KEGG" id="nta:3205347"/>
<dbReference type="OMA" id="HQNESFN"/>
<dbReference type="OrthoDB" id="1301972at2759"/>
<dbReference type="Proteomes" id="UP000084051">
    <property type="component" value="Mitochondrion MT"/>
</dbReference>
<dbReference type="GO" id="GO:0005743">
    <property type="term" value="C:mitochondrial inner membrane"/>
    <property type="evidence" value="ECO:0007669"/>
    <property type="project" value="UniProtKB-SubCell"/>
</dbReference>
<dbReference type="GO" id="GO:0045259">
    <property type="term" value="C:proton-transporting ATP synthase complex"/>
    <property type="evidence" value="ECO:0000318"/>
    <property type="project" value="GO_Central"/>
</dbReference>
<dbReference type="GO" id="GO:0015078">
    <property type="term" value="F:proton transmembrane transporter activity"/>
    <property type="evidence" value="ECO:0007669"/>
    <property type="project" value="InterPro"/>
</dbReference>
<dbReference type="GO" id="GO:0015986">
    <property type="term" value="P:proton motive force-driven ATP synthesis"/>
    <property type="evidence" value="ECO:0000318"/>
    <property type="project" value="GO_Central"/>
</dbReference>
<dbReference type="CDD" id="cd00310">
    <property type="entry name" value="ATP-synt_Fo_a_6"/>
    <property type="match status" value="1"/>
</dbReference>
<dbReference type="FunFam" id="1.20.120.220:FF:000003">
    <property type="entry name" value="ATP synthase subunit a"/>
    <property type="match status" value="1"/>
</dbReference>
<dbReference type="Gene3D" id="1.20.120.220">
    <property type="entry name" value="ATP synthase, F0 complex, subunit A"/>
    <property type="match status" value="1"/>
</dbReference>
<dbReference type="HAMAP" id="MF_01393">
    <property type="entry name" value="ATP_synth_a_bact"/>
    <property type="match status" value="1"/>
</dbReference>
<dbReference type="InterPro" id="IPR000568">
    <property type="entry name" value="ATP_synth_F0_asu"/>
</dbReference>
<dbReference type="InterPro" id="IPR023011">
    <property type="entry name" value="ATP_synth_F0_asu_AS"/>
</dbReference>
<dbReference type="InterPro" id="IPR045083">
    <property type="entry name" value="ATP_synth_F0_asu_bact/mt"/>
</dbReference>
<dbReference type="InterPro" id="IPR035908">
    <property type="entry name" value="F0_ATP_A_sf"/>
</dbReference>
<dbReference type="NCBIfam" id="TIGR01131">
    <property type="entry name" value="ATP_synt_6_or_A"/>
    <property type="match status" value="1"/>
</dbReference>
<dbReference type="NCBIfam" id="NF004482">
    <property type="entry name" value="PRK05815.2-4"/>
    <property type="match status" value="1"/>
</dbReference>
<dbReference type="PANTHER" id="PTHR11410">
    <property type="entry name" value="ATP SYNTHASE SUBUNIT A"/>
    <property type="match status" value="1"/>
</dbReference>
<dbReference type="PANTHER" id="PTHR11410:SF0">
    <property type="entry name" value="ATP SYNTHASE SUBUNIT A"/>
    <property type="match status" value="1"/>
</dbReference>
<dbReference type="Pfam" id="PF00119">
    <property type="entry name" value="ATP-synt_A"/>
    <property type="match status" value="1"/>
</dbReference>
<dbReference type="PRINTS" id="PR00123">
    <property type="entry name" value="ATPASEA"/>
</dbReference>
<dbReference type="SUPFAM" id="SSF81336">
    <property type="entry name" value="F1F0 ATP synthase subunit A"/>
    <property type="match status" value="1"/>
</dbReference>
<dbReference type="PROSITE" id="PS00449">
    <property type="entry name" value="ATPASE_A"/>
    <property type="match status" value="1"/>
</dbReference>
<organism>
    <name type="scientific">Nicotiana tabacum</name>
    <name type="common">Common tobacco</name>
    <dbReference type="NCBI Taxonomy" id="4097"/>
    <lineage>
        <taxon>Eukaryota</taxon>
        <taxon>Viridiplantae</taxon>
        <taxon>Streptophyta</taxon>
        <taxon>Embryophyta</taxon>
        <taxon>Tracheophyta</taxon>
        <taxon>Spermatophyta</taxon>
        <taxon>Magnoliopsida</taxon>
        <taxon>eudicotyledons</taxon>
        <taxon>Gunneridae</taxon>
        <taxon>Pentapetalae</taxon>
        <taxon>asterids</taxon>
        <taxon>lamiids</taxon>
        <taxon>Solanales</taxon>
        <taxon>Solanaceae</taxon>
        <taxon>Nicotianoideae</taxon>
        <taxon>Nicotianeae</taxon>
        <taxon>Nicotiana</taxon>
    </lineage>
</organism>
<evidence type="ECO:0000255" key="1"/>
<evidence type="ECO:0000305" key="2"/>
<feature type="chain" id="PRO_0000082178" description="ATP synthase subunit a">
    <location>
        <begin position="1"/>
        <end position="395"/>
    </location>
</feature>
<feature type="transmembrane region" description="Helical" evidence="1">
    <location>
        <begin position="153"/>
        <end position="173"/>
    </location>
</feature>
<feature type="transmembrane region" description="Helical" evidence="1">
    <location>
        <begin position="246"/>
        <end position="266"/>
    </location>
</feature>
<feature type="transmembrane region" description="Helical" evidence="1">
    <location>
        <begin position="273"/>
        <end position="293"/>
    </location>
</feature>
<feature type="transmembrane region" description="Helical" evidence="1">
    <location>
        <begin position="313"/>
        <end position="333"/>
    </location>
</feature>
<feature type="transmembrane region" description="Helical" evidence="1">
    <location>
        <begin position="339"/>
        <end position="359"/>
    </location>
</feature>
<accession>P05499</accession>
<name>ATP6_TOBAC</name>
<gene>
    <name type="primary">ATP6</name>
</gene>
<comment type="function">
    <text>Mitochondrial membrane ATP synthase (F(1)F(0) ATP synthase or Complex V) produces ATP from ADP in the presence of a proton gradient across the membrane which is generated by electron transport complexes of the respiratory chain. F-type ATPases consist of two structural domains, F(1) - containing the extramembraneous catalytic core and F(0) - containing the membrane proton channel, linked together by a central stalk and a peripheral stalk. During catalysis, ATP synthesis in the catalytic domain of F(1) is coupled via a rotary mechanism of the central stalk subunits to proton translocation. Key component of the proton channel; it may play a direct role in the translocation of protons across the membrane.</text>
</comment>
<comment type="subunit">
    <text>F-type ATPases have 2 components, CF(1) - the catalytic core - and CF(0) - the membrane proton channel. CF(1) has five subunits: alpha(3), beta(3), gamma(1), delta(1), epsilon(1). CF(0) has three main subunits: a, b and c.</text>
</comment>
<comment type="subcellular location">
    <subcellularLocation>
        <location>Mitochondrion inner membrane</location>
        <topology>Multi-pass membrane protein</topology>
    </subcellularLocation>
</comment>
<comment type="similarity">
    <text evidence="2">Belongs to the ATPase A chain family.</text>
</comment>